<gene>
    <name type="primary">KU80</name>
    <name type="ordered locus">YALI0E02068g</name>
</gene>
<name>KU80_YARLI</name>
<protein>
    <recommendedName>
        <fullName>ATP-dependent DNA helicase II subunit 2</fullName>
        <ecNumber>3.6.4.12</ecNumber>
    </recommendedName>
    <alternativeName>
        <fullName>ATP-dependent DNA helicase II subunit Ku80</fullName>
    </alternativeName>
</protein>
<comment type="function">
    <text evidence="1">Single-stranded DNA-dependent ATP-dependent helicase. Involved in non-homologous end joining (NHEJ) DNA double strand break repair. DNA-binding is sequence-independent but has a high affinity to nicks in double-stranded DNA and to the ends of duplex DNA. Binds to naturally occurring chromosomal ends, and therefore provides chromosomal end protection. Required also for telomere recombination to repair telomeric ends in the absence of telomerase. KU70, of the KU70/KU80 heterodimer, binds to the stem loop of TLC1, the RNA component of telomerase. Involved in telomere maintenance. Interacts with telomeric repeats and subtelomeric sequences thereby controlling telomere length and protecting against subtelomeric rearrangement. Maintains telomeric chromatin, which is involved in silencing the expression of genes located at the telomere. Required for mating-type switching (By similarity).</text>
</comment>
<comment type="catalytic activity">
    <reaction>
        <text>ATP + H2O = ADP + phosphate + H(+)</text>
        <dbReference type="Rhea" id="RHEA:13065"/>
        <dbReference type="ChEBI" id="CHEBI:15377"/>
        <dbReference type="ChEBI" id="CHEBI:15378"/>
        <dbReference type="ChEBI" id="CHEBI:30616"/>
        <dbReference type="ChEBI" id="CHEBI:43474"/>
        <dbReference type="ChEBI" id="CHEBI:456216"/>
        <dbReference type="EC" id="3.6.4.12"/>
    </reaction>
</comment>
<comment type="subunit">
    <text evidence="1">Heterodimer of Ku70 and Ku80.</text>
</comment>
<comment type="subcellular location">
    <subcellularLocation>
        <location evidence="1">Nucleus</location>
    </subcellularLocation>
    <subcellularLocation>
        <location evidence="1">Chromosome</location>
        <location evidence="1">Telomere</location>
    </subcellularLocation>
</comment>
<comment type="similarity">
    <text evidence="3">Belongs to the ku80 family.</text>
</comment>
<feature type="chain" id="PRO_0000278356" description="ATP-dependent DNA helicase II subunit 2">
    <location>
        <begin position="1"/>
        <end position="726"/>
    </location>
</feature>
<feature type="domain" description="Ku">
    <location>
        <begin position="248"/>
        <end position="475"/>
    </location>
</feature>
<feature type="region of interest" description="Disordered" evidence="2">
    <location>
        <begin position="591"/>
        <end position="620"/>
    </location>
</feature>
<feature type="compositionally biased region" description="Low complexity" evidence="2">
    <location>
        <begin position="605"/>
        <end position="618"/>
    </location>
</feature>
<sequence>MASKEATVYVVDLHESMGREMARGHDSKEVTDLNWGLQYIYSEISNKILSGRKTDVVGLVGVHTDTTQNMFEEESGFEHIDIITPIQQFNLDTLLEAKKQLVPNSDNKGDLISGIVVAVQMIKLYTKALKYIRNIVVLTNGQGNMNLGDSGGIIKQLNENRIILKVMGVDFDDEEVDYFEEDKPEHKRENELKLKEFVDRCEDSVFATYKEARDSLDIPKVKAVNPVRAFQGNLVLSDPEQQPPQRVMSIGVEVFPCTRRATAMTASSYAMSKIEPATISTPSQNNLQAVKWDRQYYVNDESGIGGKKELDRDTLENGYRYGSEIVYITKEEEEAIMFPTSASLQVIGFVNKKSVPPYMLMGHTDYIIGQRGNNRDAVAISAFARALFETDNFGLARYVNKDGKDPQIVVLMPYIRAELEGLVFCQLPFAEDERKFILPSLTSLETRSGNKTVTTHSRLLPTKEMLDAMDDYVDAMDLSKLKGEDDEPWLTMEECFNPSIHHIRNVVKECAVSQDYGKIPEPLPILTRFSQPAEELTEEAKPQLELLKHLFDIKEQFREAKKRKTEVTVGQTGLDLDALLEGELEVKLESSQTLSSNVKSEPGRQTASQSSQNSQQLSLDPENICPDFIRTLNKIDTKATSDEEFRSGATNLYKQTITLLEEKLESSKGNDAYNEIIGVLQTMREQADEMEIPDVFTAAKGQFVSKLERGDLGGQKNVLVAQINSI</sequence>
<proteinExistence type="inferred from homology"/>
<dbReference type="EC" id="3.6.4.12"/>
<dbReference type="EMBL" id="CR382131">
    <property type="protein sequence ID" value="CAG79022.1"/>
    <property type="molecule type" value="Genomic_DNA"/>
</dbReference>
<dbReference type="RefSeq" id="XP_503443.1">
    <property type="nucleotide sequence ID" value="XM_503443.1"/>
</dbReference>
<dbReference type="SMR" id="Q6C7B9"/>
<dbReference type="FunCoup" id="Q6C7B9">
    <property type="interactions" value="150"/>
</dbReference>
<dbReference type="STRING" id="284591.Q6C7B9"/>
<dbReference type="EnsemblFungi" id="CAG79022">
    <property type="protein sequence ID" value="CAG79022"/>
    <property type="gene ID" value="YALI0_E02068g"/>
</dbReference>
<dbReference type="KEGG" id="yli:2912079"/>
<dbReference type="VEuPathDB" id="FungiDB:YALI0_E02068g"/>
<dbReference type="HOGENOM" id="CLU_010975_1_1_1"/>
<dbReference type="InParanoid" id="Q6C7B9"/>
<dbReference type="OMA" id="WAMQYVW"/>
<dbReference type="OrthoDB" id="116932at4891"/>
<dbReference type="Proteomes" id="UP000001300">
    <property type="component" value="Chromosome E"/>
</dbReference>
<dbReference type="GO" id="GO:0000781">
    <property type="term" value="C:chromosome, telomeric region"/>
    <property type="evidence" value="ECO:0007669"/>
    <property type="project" value="UniProtKB-SubCell"/>
</dbReference>
<dbReference type="GO" id="GO:0043564">
    <property type="term" value="C:Ku70:Ku80 complex"/>
    <property type="evidence" value="ECO:0000318"/>
    <property type="project" value="GO_Central"/>
</dbReference>
<dbReference type="GO" id="GO:0005524">
    <property type="term" value="F:ATP binding"/>
    <property type="evidence" value="ECO:0007669"/>
    <property type="project" value="UniProtKB-KW"/>
</dbReference>
<dbReference type="GO" id="GO:0016887">
    <property type="term" value="F:ATP hydrolysis activity"/>
    <property type="evidence" value="ECO:0007669"/>
    <property type="project" value="RHEA"/>
</dbReference>
<dbReference type="GO" id="GO:0003684">
    <property type="term" value="F:damaged DNA binding"/>
    <property type="evidence" value="ECO:0007669"/>
    <property type="project" value="InterPro"/>
</dbReference>
<dbReference type="GO" id="GO:0004386">
    <property type="term" value="F:helicase activity"/>
    <property type="evidence" value="ECO:0007669"/>
    <property type="project" value="UniProtKB-KW"/>
</dbReference>
<dbReference type="GO" id="GO:0042162">
    <property type="term" value="F:telomeric DNA binding"/>
    <property type="evidence" value="ECO:0000318"/>
    <property type="project" value="GO_Central"/>
</dbReference>
<dbReference type="GO" id="GO:0006310">
    <property type="term" value="P:DNA recombination"/>
    <property type="evidence" value="ECO:0007669"/>
    <property type="project" value="UniProtKB-KW"/>
</dbReference>
<dbReference type="GO" id="GO:0006303">
    <property type="term" value="P:double-strand break repair via nonhomologous end joining"/>
    <property type="evidence" value="ECO:0000318"/>
    <property type="project" value="GO_Central"/>
</dbReference>
<dbReference type="GO" id="GO:0000723">
    <property type="term" value="P:telomere maintenance"/>
    <property type="evidence" value="ECO:0000318"/>
    <property type="project" value="GO_Central"/>
</dbReference>
<dbReference type="CDD" id="cd00873">
    <property type="entry name" value="KU80"/>
    <property type="match status" value="1"/>
</dbReference>
<dbReference type="FunFam" id="1.10.1600.10:FF:000008">
    <property type="entry name" value="ATP-dependent DNA helicase II subunit 2"/>
    <property type="match status" value="1"/>
</dbReference>
<dbReference type="FunFam" id="3.40.50.410:FF:000073">
    <property type="entry name" value="ATP-dependent DNA helicase II subunit 2"/>
    <property type="match status" value="1"/>
</dbReference>
<dbReference type="Gene3D" id="1.10.1600.10">
    <property type="match status" value="1"/>
</dbReference>
<dbReference type="Gene3D" id="2.40.290.10">
    <property type="match status" value="1"/>
</dbReference>
<dbReference type="Gene3D" id="3.40.50.410">
    <property type="entry name" value="von Willebrand factor, type A domain"/>
    <property type="match status" value="1"/>
</dbReference>
<dbReference type="InterPro" id="IPR006164">
    <property type="entry name" value="Ku70/Ku80_beta-barrel_dom"/>
</dbReference>
<dbReference type="InterPro" id="IPR024193">
    <property type="entry name" value="Ku80"/>
</dbReference>
<dbReference type="InterPro" id="IPR016194">
    <property type="entry name" value="SPOC-like_C_dom_sf"/>
</dbReference>
<dbReference type="InterPro" id="IPR036465">
    <property type="entry name" value="vWFA_dom_sf"/>
</dbReference>
<dbReference type="PANTHER" id="PTHR12604">
    <property type="entry name" value="KU AUTOANTIGEN DNA HELICASE"/>
    <property type="match status" value="1"/>
</dbReference>
<dbReference type="PANTHER" id="PTHR12604:SF4">
    <property type="entry name" value="X-RAY REPAIR CROSS-COMPLEMENTING PROTEIN 5"/>
    <property type="match status" value="1"/>
</dbReference>
<dbReference type="Pfam" id="PF02735">
    <property type="entry name" value="Ku"/>
    <property type="match status" value="1"/>
</dbReference>
<dbReference type="PIRSF" id="PIRSF016570">
    <property type="entry name" value="Ku80"/>
    <property type="match status" value="1"/>
</dbReference>
<dbReference type="SMART" id="SM00559">
    <property type="entry name" value="Ku78"/>
    <property type="match status" value="1"/>
</dbReference>
<dbReference type="SUPFAM" id="SSF100939">
    <property type="entry name" value="SPOC domain-like"/>
    <property type="match status" value="1"/>
</dbReference>
<dbReference type="SUPFAM" id="SSF53300">
    <property type="entry name" value="vWA-like"/>
    <property type="match status" value="1"/>
</dbReference>
<keyword id="KW-0067">ATP-binding</keyword>
<keyword id="KW-0158">Chromosome</keyword>
<keyword id="KW-0227">DNA damage</keyword>
<keyword id="KW-0233">DNA recombination</keyword>
<keyword id="KW-0234">DNA repair</keyword>
<keyword id="KW-0238">DNA-binding</keyword>
<keyword id="KW-0347">Helicase</keyword>
<keyword id="KW-0378">Hydrolase</keyword>
<keyword id="KW-0547">Nucleotide-binding</keyword>
<keyword id="KW-0539">Nucleus</keyword>
<keyword id="KW-1185">Reference proteome</keyword>
<keyword id="KW-0779">Telomere</keyword>
<organism>
    <name type="scientific">Yarrowia lipolytica (strain CLIB 122 / E 150)</name>
    <name type="common">Yeast</name>
    <name type="synonym">Candida lipolytica</name>
    <dbReference type="NCBI Taxonomy" id="284591"/>
    <lineage>
        <taxon>Eukaryota</taxon>
        <taxon>Fungi</taxon>
        <taxon>Dikarya</taxon>
        <taxon>Ascomycota</taxon>
        <taxon>Saccharomycotina</taxon>
        <taxon>Dipodascomycetes</taxon>
        <taxon>Dipodascales</taxon>
        <taxon>Dipodascales incertae sedis</taxon>
        <taxon>Yarrowia</taxon>
    </lineage>
</organism>
<evidence type="ECO:0000250" key="1"/>
<evidence type="ECO:0000256" key="2">
    <source>
        <dbReference type="SAM" id="MobiDB-lite"/>
    </source>
</evidence>
<evidence type="ECO:0000305" key="3"/>
<accession>Q6C7B9</accession>
<reference key="1">
    <citation type="journal article" date="2004" name="Nature">
        <title>Genome evolution in yeasts.</title>
        <authorList>
            <person name="Dujon B."/>
            <person name="Sherman D."/>
            <person name="Fischer G."/>
            <person name="Durrens P."/>
            <person name="Casaregola S."/>
            <person name="Lafontaine I."/>
            <person name="de Montigny J."/>
            <person name="Marck C."/>
            <person name="Neuveglise C."/>
            <person name="Talla E."/>
            <person name="Goffard N."/>
            <person name="Frangeul L."/>
            <person name="Aigle M."/>
            <person name="Anthouard V."/>
            <person name="Babour A."/>
            <person name="Barbe V."/>
            <person name="Barnay S."/>
            <person name="Blanchin S."/>
            <person name="Beckerich J.-M."/>
            <person name="Beyne E."/>
            <person name="Bleykasten C."/>
            <person name="Boisrame A."/>
            <person name="Boyer J."/>
            <person name="Cattolico L."/>
            <person name="Confanioleri F."/>
            <person name="de Daruvar A."/>
            <person name="Despons L."/>
            <person name="Fabre E."/>
            <person name="Fairhead C."/>
            <person name="Ferry-Dumazet H."/>
            <person name="Groppi A."/>
            <person name="Hantraye F."/>
            <person name="Hennequin C."/>
            <person name="Jauniaux N."/>
            <person name="Joyet P."/>
            <person name="Kachouri R."/>
            <person name="Kerrest A."/>
            <person name="Koszul R."/>
            <person name="Lemaire M."/>
            <person name="Lesur I."/>
            <person name="Ma L."/>
            <person name="Muller H."/>
            <person name="Nicaud J.-M."/>
            <person name="Nikolski M."/>
            <person name="Oztas S."/>
            <person name="Ozier-Kalogeropoulos O."/>
            <person name="Pellenz S."/>
            <person name="Potier S."/>
            <person name="Richard G.-F."/>
            <person name="Straub M.-L."/>
            <person name="Suleau A."/>
            <person name="Swennen D."/>
            <person name="Tekaia F."/>
            <person name="Wesolowski-Louvel M."/>
            <person name="Westhof E."/>
            <person name="Wirth B."/>
            <person name="Zeniou-Meyer M."/>
            <person name="Zivanovic Y."/>
            <person name="Bolotin-Fukuhara M."/>
            <person name="Thierry A."/>
            <person name="Bouchier C."/>
            <person name="Caudron B."/>
            <person name="Scarpelli C."/>
            <person name="Gaillardin C."/>
            <person name="Weissenbach J."/>
            <person name="Wincker P."/>
            <person name="Souciet J.-L."/>
        </authorList>
    </citation>
    <scope>NUCLEOTIDE SEQUENCE [LARGE SCALE GENOMIC DNA]</scope>
    <source>
        <strain>CLIB 122 / E 150</strain>
    </source>
</reference>